<evidence type="ECO:0000255" key="1">
    <source>
        <dbReference type="HAMAP-Rule" id="MF_00505"/>
    </source>
</evidence>
<gene>
    <name evidence="1" type="primary">htpG</name>
    <name type="ordered locus">HH_1740</name>
</gene>
<dbReference type="EMBL" id="AE017125">
    <property type="protein sequence ID" value="AAP78337.1"/>
    <property type="molecule type" value="Genomic_DNA"/>
</dbReference>
<dbReference type="SMR" id="Q7VFD7"/>
<dbReference type="STRING" id="235279.HH_1740"/>
<dbReference type="KEGG" id="hhe:HH_1740"/>
<dbReference type="eggNOG" id="COG0326">
    <property type="taxonomic scope" value="Bacteria"/>
</dbReference>
<dbReference type="HOGENOM" id="CLU_006684_3_0_7"/>
<dbReference type="OrthoDB" id="9802640at2"/>
<dbReference type="Proteomes" id="UP000002495">
    <property type="component" value="Chromosome"/>
</dbReference>
<dbReference type="GO" id="GO:0005737">
    <property type="term" value="C:cytoplasm"/>
    <property type="evidence" value="ECO:0007669"/>
    <property type="project" value="UniProtKB-SubCell"/>
</dbReference>
<dbReference type="GO" id="GO:0005524">
    <property type="term" value="F:ATP binding"/>
    <property type="evidence" value="ECO:0007669"/>
    <property type="project" value="UniProtKB-UniRule"/>
</dbReference>
<dbReference type="GO" id="GO:0016887">
    <property type="term" value="F:ATP hydrolysis activity"/>
    <property type="evidence" value="ECO:0007669"/>
    <property type="project" value="InterPro"/>
</dbReference>
<dbReference type="GO" id="GO:0140662">
    <property type="term" value="F:ATP-dependent protein folding chaperone"/>
    <property type="evidence" value="ECO:0007669"/>
    <property type="project" value="InterPro"/>
</dbReference>
<dbReference type="GO" id="GO:0051082">
    <property type="term" value="F:unfolded protein binding"/>
    <property type="evidence" value="ECO:0007669"/>
    <property type="project" value="UniProtKB-UniRule"/>
</dbReference>
<dbReference type="CDD" id="cd16927">
    <property type="entry name" value="HATPase_Hsp90-like"/>
    <property type="match status" value="1"/>
</dbReference>
<dbReference type="FunFam" id="3.30.230.80:FF:000002">
    <property type="entry name" value="Molecular chaperone HtpG"/>
    <property type="match status" value="1"/>
</dbReference>
<dbReference type="FunFam" id="3.30.565.10:FF:000009">
    <property type="entry name" value="Molecular chaperone HtpG"/>
    <property type="match status" value="1"/>
</dbReference>
<dbReference type="Gene3D" id="3.30.230.80">
    <property type="match status" value="1"/>
</dbReference>
<dbReference type="Gene3D" id="3.40.50.11260">
    <property type="match status" value="1"/>
</dbReference>
<dbReference type="Gene3D" id="1.20.120.790">
    <property type="entry name" value="Heat shock protein 90, C-terminal domain"/>
    <property type="match status" value="1"/>
</dbReference>
<dbReference type="Gene3D" id="3.30.565.10">
    <property type="entry name" value="Histidine kinase-like ATPase, C-terminal domain"/>
    <property type="match status" value="1"/>
</dbReference>
<dbReference type="HAMAP" id="MF_00505">
    <property type="entry name" value="HSP90"/>
    <property type="match status" value="1"/>
</dbReference>
<dbReference type="InterPro" id="IPR036890">
    <property type="entry name" value="HATPase_C_sf"/>
</dbReference>
<dbReference type="InterPro" id="IPR019805">
    <property type="entry name" value="Heat_shock_protein_90_CS"/>
</dbReference>
<dbReference type="InterPro" id="IPR037196">
    <property type="entry name" value="HSP90_C"/>
</dbReference>
<dbReference type="InterPro" id="IPR001404">
    <property type="entry name" value="Hsp90_fam"/>
</dbReference>
<dbReference type="InterPro" id="IPR020575">
    <property type="entry name" value="Hsp90_N"/>
</dbReference>
<dbReference type="InterPro" id="IPR020568">
    <property type="entry name" value="Ribosomal_Su5_D2-typ_SF"/>
</dbReference>
<dbReference type="NCBIfam" id="NF003555">
    <property type="entry name" value="PRK05218.1"/>
    <property type="match status" value="1"/>
</dbReference>
<dbReference type="PANTHER" id="PTHR11528">
    <property type="entry name" value="HEAT SHOCK PROTEIN 90 FAMILY MEMBER"/>
    <property type="match status" value="1"/>
</dbReference>
<dbReference type="Pfam" id="PF13589">
    <property type="entry name" value="HATPase_c_3"/>
    <property type="match status" value="1"/>
</dbReference>
<dbReference type="Pfam" id="PF00183">
    <property type="entry name" value="HSP90"/>
    <property type="match status" value="1"/>
</dbReference>
<dbReference type="PIRSF" id="PIRSF002583">
    <property type="entry name" value="Hsp90"/>
    <property type="match status" value="1"/>
</dbReference>
<dbReference type="PRINTS" id="PR00775">
    <property type="entry name" value="HEATSHOCK90"/>
</dbReference>
<dbReference type="SMART" id="SM00387">
    <property type="entry name" value="HATPase_c"/>
    <property type="match status" value="1"/>
</dbReference>
<dbReference type="SUPFAM" id="SSF55874">
    <property type="entry name" value="ATPase domain of HSP90 chaperone/DNA topoisomerase II/histidine kinase"/>
    <property type="match status" value="1"/>
</dbReference>
<dbReference type="SUPFAM" id="SSF110942">
    <property type="entry name" value="HSP90 C-terminal domain"/>
    <property type="match status" value="1"/>
</dbReference>
<dbReference type="SUPFAM" id="SSF54211">
    <property type="entry name" value="Ribosomal protein S5 domain 2-like"/>
    <property type="match status" value="1"/>
</dbReference>
<dbReference type="PROSITE" id="PS00298">
    <property type="entry name" value="HSP90"/>
    <property type="match status" value="1"/>
</dbReference>
<feature type="chain" id="PRO_0000062991" description="Chaperone protein HtpG">
    <location>
        <begin position="1"/>
        <end position="618"/>
    </location>
</feature>
<feature type="region of interest" description="A; substrate-binding" evidence="1">
    <location>
        <begin position="1"/>
        <end position="340"/>
    </location>
</feature>
<feature type="region of interest" description="B" evidence="1">
    <location>
        <begin position="341"/>
        <end position="545"/>
    </location>
</feature>
<feature type="region of interest" description="C" evidence="1">
    <location>
        <begin position="546"/>
        <end position="618"/>
    </location>
</feature>
<comment type="function">
    <text evidence="1">Molecular chaperone. Has ATPase activity.</text>
</comment>
<comment type="subunit">
    <text evidence="1">Homodimer.</text>
</comment>
<comment type="subcellular location">
    <subcellularLocation>
        <location evidence="1">Cytoplasm</location>
    </subcellularLocation>
</comment>
<comment type="similarity">
    <text evidence="1">Belongs to the heat shock protein 90 family.</text>
</comment>
<proteinExistence type="inferred from homology"/>
<sequence>MATKHQFQTEITQLLDLMIHSLYSHKEIFLRELISNASDALDKLSYLTLTQENLKTLSFEPRIDISFDEEKKTITIEDNGIGMNENDMKEHLGIIAKSGTKSFLSQLSGDKKKDSALIGQFGVGFYSAFMVAHRVVVQSKKAGEEKAYAWVSEGKGEYEIGECVKESQGTQITLYLREEDAHFASRWEIEGIIHKYSEHIAFPIYLAFVESKFEGEGENKKEIKENKQSQINTAKALWKIPKAELKDTDYKEFYATLSHDNNEPMRWIHTKVEGNLEYTTLFYIPQKAPFDLFRVDYQSGVKLYVKRVFITDDDKELLPPYLRFVRGVIDSEDLPLNVSREILQQNKILANIKSASTKKILSEITNIAKNEADYKTFYEQFGKVLKEGLYGDYENKEKILELLRFDSFKSEYISLKAYKESMGNEQKSIYYMLGENKDALKNAPLLEKFAQKGFDVLLLSDEIDAIVMPMVGEYDKVPLKSINSKEALAELGEESIDEATQNAYEPLIKGFKDALGEQIAEVKLSSLGDAPLTLIKEDNNPMMANLMAQMGQKVPETKPILQLNITHPLFEKLKTAQEDKIKQSALLLFGAALILEGSTLKNAKDFNTELNSLLLQSL</sequence>
<reference key="1">
    <citation type="journal article" date="2003" name="Proc. Natl. Acad. Sci. U.S.A.">
        <title>The complete genome sequence of the carcinogenic bacterium Helicobacter hepaticus.</title>
        <authorList>
            <person name="Suerbaum S."/>
            <person name="Josenhans C."/>
            <person name="Sterzenbach T."/>
            <person name="Drescher B."/>
            <person name="Brandt P."/>
            <person name="Bell M."/>
            <person name="Droege M."/>
            <person name="Fartmann B."/>
            <person name="Fischer H.-P."/>
            <person name="Ge Z."/>
            <person name="Hoerster A."/>
            <person name="Holland R."/>
            <person name="Klein K."/>
            <person name="Koenig J."/>
            <person name="Macko L."/>
            <person name="Mendz G.L."/>
            <person name="Nyakatura G."/>
            <person name="Schauer D.B."/>
            <person name="Shen Z."/>
            <person name="Weber J."/>
            <person name="Frosch M."/>
            <person name="Fox J.G."/>
        </authorList>
    </citation>
    <scope>NUCLEOTIDE SEQUENCE [LARGE SCALE GENOMIC DNA]</scope>
    <source>
        <strain>ATCC 51449 / 3B1</strain>
    </source>
</reference>
<accession>Q7VFD7</accession>
<organism>
    <name type="scientific">Helicobacter hepaticus (strain ATCC 51449 / 3B1)</name>
    <dbReference type="NCBI Taxonomy" id="235279"/>
    <lineage>
        <taxon>Bacteria</taxon>
        <taxon>Pseudomonadati</taxon>
        <taxon>Campylobacterota</taxon>
        <taxon>Epsilonproteobacteria</taxon>
        <taxon>Campylobacterales</taxon>
        <taxon>Helicobacteraceae</taxon>
        <taxon>Helicobacter</taxon>
    </lineage>
</organism>
<keyword id="KW-0067">ATP-binding</keyword>
<keyword id="KW-0143">Chaperone</keyword>
<keyword id="KW-0963">Cytoplasm</keyword>
<keyword id="KW-0547">Nucleotide-binding</keyword>
<keyword id="KW-1185">Reference proteome</keyword>
<keyword id="KW-0346">Stress response</keyword>
<name>HTPG_HELHP</name>
<protein>
    <recommendedName>
        <fullName evidence="1">Chaperone protein HtpG</fullName>
    </recommendedName>
    <alternativeName>
        <fullName evidence="1">Heat shock protein HtpG</fullName>
    </alternativeName>
    <alternativeName>
        <fullName evidence="1">High temperature protein G</fullName>
    </alternativeName>
</protein>